<evidence type="ECO:0000255" key="1"/>
<evidence type="ECO:0000255" key="2">
    <source>
        <dbReference type="PROSITE-ProRule" id="PRU00448"/>
    </source>
</evidence>
<evidence type="ECO:0000255" key="3">
    <source>
        <dbReference type="PROSITE-ProRule" id="PRU00498"/>
    </source>
</evidence>
<evidence type="ECO:0000269" key="4">
    <source>
    </source>
</evidence>
<evidence type="ECO:0000269" key="5">
    <source>
    </source>
</evidence>
<evidence type="ECO:0000303" key="6">
    <source>
    </source>
</evidence>
<evidence type="ECO:0000305" key="7"/>
<evidence type="ECO:0000312" key="8">
    <source>
        <dbReference type="Araport" id="AT1G53210"/>
    </source>
</evidence>
<evidence type="ECO:0000312" key="9">
    <source>
        <dbReference type="EMBL" id="AAF69532.1"/>
    </source>
</evidence>
<reference key="1">
    <citation type="journal article" date="2000" name="Nature">
        <title>Sequence and analysis of chromosome 1 of the plant Arabidopsis thaliana.</title>
        <authorList>
            <person name="Theologis A."/>
            <person name="Ecker J.R."/>
            <person name="Palm C.J."/>
            <person name="Federspiel N.A."/>
            <person name="Kaul S."/>
            <person name="White O."/>
            <person name="Alonso J."/>
            <person name="Altafi H."/>
            <person name="Araujo R."/>
            <person name="Bowman C.L."/>
            <person name="Brooks S.Y."/>
            <person name="Buehler E."/>
            <person name="Chan A."/>
            <person name="Chao Q."/>
            <person name="Chen H."/>
            <person name="Cheuk R.F."/>
            <person name="Chin C.W."/>
            <person name="Chung M.K."/>
            <person name="Conn L."/>
            <person name="Conway A.B."/>
            <person name="Conway A.R."/>
            <person name="Creasy T.H."/>
            <person name="Dewar K."/>
            <person name="Dunn P."/>
            <person name="Etgu P."/>
            <person name="Feldblyum T.V."/>
            <person name="Feng J.-D."/>
            <person name="Fong B."/>
            <person name="Fujii C.Y."/>
            <person name="Gill J.E."/>
            <person name="Goldsmith A.D."/>
            <person name="Haas B."/>
            <person name="Hansen N.F."/>
            <person name="Hughes B."/>
            <person name="Huizar L."/>
            <person name="Hunter J.L."/>
            <person name="Jenkins J."/>
            <person name="Johnson-Hopson C."/>
            <person name="Khan S."/>
            <person name="Khaykin E."/>
            <person name="Kim C.J."/>
            <person name="Koo H.L."/>
            <person name="Kremenetskaia I."/>
            <person name="Kurtz D.B."/>
            <person name="Kwan A."/>
            <person name="Lam B."/>
            <person name="Langin-Hooper S."/>
            <person name="Lee A."/>
            <person name="Lee J.M."/>
            <person name="Lenz C.A."/>
            <person name="Li J.H."/>
            <person name="Li Y.-P."/>
            <person name="Lin X."/>
            <person name="Liu S.X."/>
            <person name="Liu Z.A."/>
            <person name="Luros J.S."/>
            <person name="Maiti R."/>
            <person name="Marziali A."/>
            <person name="Militscher J."/>
            <person name="Miranda M."/>
            <person name="Nguyen M."/>
            <person name="Nierman W.C."/>
            <person name="Osborne B.I."/>
            <person name="Pai G."/>
            <person name="Peterson J."/>
            <person name="Pham P.K."/>
            <person name="Rizzo M."/>
            <person name="Rooney T."/>
            <person name="Rowley D."/>
            <person name="Sakano H."/>
            <person name="Salzberg S.L."/>
            <person name="Schwartz J.R."/>
            <person name="Shinn P."/>
            <person name="Southwick A.M."/>
            <person name="Sun H."/>
            <person name="Tallon L.J."/>
            <person name="Tambunga G."/>
            <person name="Toriumi M.J."/>
            <person name="Town C.D."/>
            <person name="Utterback T."/>
            <person name="Van Aken S."/>
            <person name="Vaysberg M."/>
            <person name="Vysotskaia V.S."/>
            <person name="Walker M."/>
            <person name="Wu D."/>
            <person name="Yu G."/>
            <person name="Fraser C.M."/>
            <person name="Venter J.C."/>
            <person name="Davis R.W."/>
        </authorList>
    </citation>
    <scope>NUCLEOTIDE SEQUENCE [LARGE SCALE GENOMIC DNA]</scope>
    <source>
        <strain>cv. Columbia</strain>
    </source>
</reference>
<reference key="2">
    <citation type="journal article" date="2017" name="Plant J.">
        <title>Araport11: a complete reannotation of the Arabidopsis thaliana reference genome.</title>
        <authorList>
            <person name="Cheng C.Y."/>
            <person name="Krishnakumar V."/>
            <person name="Chan A.P."/>
            <person name="Thibaud-Nissen F."/>
            <person name="Schobel S."/>
            <person name="Town C.D."/>
        </authorList>
    </citation>
    <scope>GENOME REANNOTATION</scope>
    <source>
        <strain>cv. Columbia</strain>
    </source>
</reference>
<reference key="3">
    <citation type="journal article" date="2003" name="Science">
        <title>Empirical analysis of transcriptional activity in the Arabidopsis genome.</title>
        <authorList>
            <person name="Yamada K."/>
            <person name="Lim J."/>
            <person name="Dale J.M."/>
            <person name="Chen H."/>
            <person name="Shinn P."/>
            <person name="Palm C.J."/>
            <person name="Southwick A.M."/>
            <person name="Wu H.C."/>
            <person name="Kim C.J."/>
            <person name="Nguyen M."/>
            <person name="Pham P.K."/>
            <person name="Cheuk R.F."/>
            <person name="Karlin-Newmann G."/>
            <person name="Liu S.X."/>
            <person name="Lam B."/>
            <person name="Sakano H."/>
            <person name="Wu T."/>
            <person name="Yu G."/>
            <person name="Miranda M."/>
            <person name="Quach H.L."/>
            <person name="Tripp M."/>
            <person name="Chang C.H."/>
            <person name="Lee J.M."/>
            <person name="Toriumi M.J."/>
            <person name="Chan M.M."/>
            <person name="Tang C.C."/>
            <person name="Onodera C.S."/>
            <person name="Deng J.M."/>
            <person name="Akiyama K."/>
            <person name="Ansari Y."/>
            <person name="Arakawa T."/>
            <person name="Banh J."/>
            <person name="Banno F."/>
            <person name="Bowser L."/>
            <person name="Brooks S.Y."/>
            <person name="Carninci P."/>
            <person name="Chao Q."/>
            <person name="Choy N."/>
            <person name="Enju A."/>
            <person name="Goldsmith A.D."/>
            <person name="Gurjal M."/>
            <person name="Hansen N.F."/>
            <person name="Hayashizaki Y."/>
            <person name="Johnson-Hopson C."/>
            <person name="Hsuan V.W."/>
            <person name="Iida K."/>
            <person name="Karnes M."/>
            <person name="Khan S."/>
            <person name="Koesema E."/>
            <person name="Ishida J."/>
            <person name="Jiang P.X."/>
            <person name="Jones T."/>
            <person name="Kawai J."/>
            <person name="Kamiya A."/>
            <person name="Meyers C."/>
            <person name="Nakajima M."/>
            <person name="Narusaka M."/>
            <person name="Seki M."/>
            <person name="Sakurai T."/>
            <person name="Satou M."/>
            <person name="Tamse R."/>
            <person name="Vaysberg M."/>
            <person name="Wallender E.K."/>
            <person name="Wong C."/>
            <person name="Yamamura Y."/>
            <person name="Yuan S."/>
            <person name="Shinozaki K."/>
            <person name="Davis R.W."/>
            <person name="Theologis A."/>
            <person name="Ecker J.R."/>
        </authorList>
    </citation>
    <scope>NUCLEOTIDE SEQUENCE [LARGE SCALE MRNA]</scope>
    <source>
        <strain>cv. Columbia</strain>
    </source>
</reference>
<reference key="4">
    <citation type="submission" date="2004-09" db="EMBL/GenBank/DDBJ databases">
        <title>Large-scale analysis of RIKEN Arabidopsis full-length (RAFL) cDNAs.</title>
        <authorList>
            <person name="Totoki Y."/>
            <person name="Seki M."/>
            <person name="Ishida J."/>
            <person name="Nakajima M."/>
            <person name="Enju A."/>
            <person name="Kamiya A."/>
            <person name="Narusaka M."/>
            <person name="Shin-i T."/>
            <person name="Nakagawa M."/>
            <person name="Sakamoto N."/>
            <person name="Oishi K."/>
            <person name="Kohara Y."/>
            <person name="Kobayashi M."/>
            <person name="Toyoda A."/>
            <person name="Sakaki Y."/>
            <person name="Sakurai T."/>
            <person name="Iida K."/>
            <person name="Akiyama K."/>
            <person name="Satou M."/>
            <person name="Toyoda T."/>
            <person name="Konagaya A."/>
            <person name="Carninci P."/>
            <person name="Kawai J."/>
            <person name="Hayashizaki Y."/>
            <person name="Shinozaki K."/>
        </authorList>
    </citation>
    <scope>NUCLEOTIDE SEQUENCE [LARGE SCALE MRNA] OF 438-585</scope>
    <source>
        <strain>cv. Columbia</strain>
    </source>
</reference>
<reference key="5">
    <citation type="journal article" date="2012" name="J. Biol. Chem.">
        <title>A Na+/Ca2+ exchanger-like protein (AtNCL) involved in salt stress in Arabidopsis.</title>
        <authorList>
            <person name="Wang P."/>
            <person name="Li Z."/>
            <person name="Wei J."/>
            <person name="Zhao Z."/>
            <person name="Sun D."/>
            <person name="Cui S."/>
        </authorList>
    </citation>
    <scope>FUNCTION</scope>
    <scope>SUBCELLULAR LOCATION</scope>
    <scope>INDUCTION</scope>
    <scope>DISRUPTION PHENOTYPE</scope>
</reference>
<reference key="6">
    <citation type="journal article" date="2016" name="Plant Cell Environ.">
        <title>Ca(2+)-regulated and diurnal rhythm-regulated Na(+)/Ca(2+) exchanger AtNCL affects flowering time and auxin signalling in Arabidopsis.</title>
        <authorList>
            <person name="Li P."/>
            <person name="Zhang G."/>
            <person name="Gonzales N."/>
            <person name="Guo Y."/>
            <person name="Hu H."/>
            <person name="Park S."/>
            <person name="Zhao J."/>
        </authorList>
    </citation>
    <scope>FUNCTION</scope>
    <scope>SUBCELLULAR LOCATION</scope>
    <scope>TISSUE SPECIFICITY</scope>
    <scope>INDUCTION</scope>
    <scope>DISRUPTION PHENOTYPE</scope>
</reference>
<organism>
    <name type="scientific">Arabidopsis thaliana</name>
    <name type="common">Mouse-ear cress</name>
    <dbReference type="NCBI Taxonomy" id="3702"/>
    <lineage>
        <taxon>Eukaryota</taxon>
        <taxon>Viridiplantae</taxon>
        <taxon>Streptophyta</taxon>
        <taxon>Embryophyta</taxon>
        <taxon>Tracheophyta</taxon>
        <taxon>Spermatophyta</taxon>
        <taxon>Magnoliopsida</taxon>
        <taxon>eudicotyledons</taxon>
        <taxon>Gunneridae</taxon>
        <taxon>Pentapetalae</taxon>
        <taxon>rosids</taxon>
        <taxon>malvids</taxon>
        <taxon>Brassicales</taxon>
        <taxon>Brassicaceae</taxon>
        <taxon>Camelineae</taxon>
        <taxon>Arabidopsis</taxon>
    </lineage>
</organism>
<keyword id="KW-0050">Antiport</keyword>
<keyword id="KW-0106">Calcium</keyword>
<keyword id="KW-0109">Calcium transport</keyword>
<keyword id="KW-1003">Cell membrane</keyword>
<keyword id="KW-0325">Glycoprotein</keyword>
<keyword id="KW-0406">Ion transport</keyword>
<keyword id="KW-0472">Membrane</keyword>
<keyword id="KW-0479">Metal-binding</keyword>
<keyword id="KW-1185">Reference proteome</keyword>
<keyword id="KW-0677">Repeat</keyword>
<keyword id="KW-0915">Sodium</keyword>
<keyword id="KW-0739">Sodium transport</keyword>
<keyword id="KW-0346">Stress response</keyword>
<keyword id="KW-0812">Transmembrane</keyword>
<keyword id="KW-1133">Transmembrane helix</keyword>
<keyword id="KW-0813">Transport</keyword>
<keyword id="KW-0926">Vacuole</keyword>
<feature type="chain" id="PRO_5009715792" description="Sodium/calcium exchanger NCL">
    <location>
        <begin position="1"/>
        <end position="585"/>
    </location>
</feature>
<feature type="transmembrane region" description="Helical" evidence="1">
    <location>
        <begin position="83"/>
        <end position="103"/>
    </location>
</feature>
<feature type="transmembrane region" description="Helical" evidence="1">
    <location>
        <begin position="106"/>
        <end position="126"/>
    </location>
</feature>
<feature type="transmembrane region" description="Helical" evidence="1">
    <location>
        <begin position="149"/>
        <end position="169"/>
    </location>
</feature>
<feature type="transmembrane region" description="Helical" evidence="1">
    <location>
        <begin position="212"/>
        <end position="232"/>
    </location>
</feature>
<feature type="transmembrane region" description="Helical" evidence="1">
    <location>
        <begin position="239"/>
        <end position="259"/>
    </location>
</feature>
<feature type="transmembrane region" description="Helical" evidence="1">
    <location>
        <begin position="427"/>
        <end position="447"/>
    </location>
</feature>
<feature type="transmembrane region" description="Helical" evidence="1">
    <location>
        <begin position="457"/>
        <end position="477"/>
    </location>
</feature>
<feature type="transmembrane region" description="Helical" evidence="1">
    <location>
        <begin position="505"/>
        <end position="525"/>
    </location>
</feature>
<feature type="transmembrane region" description="Helical" evidence="1">
    <location>
        <begin position="532"/>
        <end position="552"/>
    </location>
</feature>
<feature type="transmembrane region" description="Helical" evidence="1">
    <location>
        <begin position="558"/>
        <end position="578"/>
    </location>
</feature>
<feature type="domain" description="EF-hand 1" evidence="2">
    <location>
        <begin position="299"/>
        <end position="334"/>
    </location>
</feature>
<feature type="domain" description="EF-hand 2" evidence="2">
    <location>
        <begin position="339"/>
        <end position="374"/>
    </location>
</feature>
<feature type="binding site" evidence="2">
    <location>
        <position position="312"/>
    </location>
    <ligand>
        <name>Ca(2+)</name>
        <dbReference type="ChEBI" id="CHEBI:29108"/>
        <label>1</label>
    </ligand>
</feature>
<feature type="binding site" evidence="2">
    <location>
        <position position="314"/>
    </location>
    <ligand>
        <name>Ca(2+)</name>
        <dbReference type="ChEBI" id="CHEBI:29108"/>
        <label>1</label>
    </ligand>
</feature>
<feature type="binding site" evidence="2">
    <location>
        <position position="316"/>
    </location>
    <ligand>
        <name>Ca(2+)</name>
        <dbReference type="ChEBI" id="CHEBI:29108"/>
        <label>1</label>
    </ligand>
</feature>
<feature type="binding site" evidence="2">
    <location>
        <position position="318"/>
    </location>
    <ligand>
        <name>Ca(2+)</name>
        <dbReference type="ChEBI" id="CHEBI:29108"/>
        <label>1</label>
    </ligand>
</feature>
<feature type="binding site" evidence="2">
    <location>
        <position position="323"/>
    </location>
    <ligand>
        <name>Ca(2+)</name>
        <dbReference type="ChEBI" id="CHEBI:29108"/>
        <label>1</label>
    </ligand>
</feature>
<feature type="binding site" evidence="7">
    <location>
        <position position="352"/>
    </location>
    <ligand>
        <name>Ca(2+)</name>
        <dbReference type="ChEBI" id="CHEBI:29108"/>
        <label>2</label>
    </ligand>
</feature>
<feature type="binding site" evidence="7">
    <location>
        <position position="356"/>
    </location>
    <ligand>
        <name>Ca(2+)</name>
        <dbReference type="ChEBI" id="CHEBI:29108"/>
        <label>2</label>
    </ligand>
</feature>
<feature type="binding site" evidence="7">
    <location>
        <position position="358"/>
    </location>
    <ligand>
        <name>Ca(2+)</name>
        <dbReference type="ChEBI" id="CHEBI:29108"/>
        <label>2</label>
    </ligand>
</feature>
<feature type="binding site" evidence="7">
    <location>
        <position position="363"/>
    </location>
    <ligand>
        <name>Ca(2+)</name>
        <dbReference type="ChEBI" id="CHEBI:29108"/>
        <label>2</label>
    </ligand>
</feature>
<feature type="glycosylation site" description="N-linked (GlcNAc...) asparagine" evidence="3">
    <location>
        <position position="478"/>
    </location>
</feature>
<dbReference type="EMBL" id="AC008007">
    <property type="protein sequence ID" value="AAF69532.1"/>
    <property type="status" value="ALT_SEQ"/>
    <property type="molecule type" value="Genomic_DNA"/>
</dbReference>
<dbReference type="EMBL" id="CP002684">
    <property type="protein sequence ID" value="AEE32908.1"/>
    <property type="molecule type" value="Genomic_DNA"/>
</dbReference>
<dbReference type="EMBL" id="AF361800">
    <property type="protein sequence ID" value="AAK32813.1"/>
    <property type="molecule type" value="mRNA"/>
</dbReference>
<dbReference type="EMBL" id="AY099550">
    <property type="protein sequence ID" value="AAM20402.1"/>
    <property type="molecule type" value="mRNA"/>
</dbReference>
<dbReference type="EMBL" id="AY133619">
    <property type="protein sequence ID" value="AAM91449.1"/>
    <property type="molecule type" value="mRNA"/>
</dbReference>
<dbReference type="EMBL" id="AK175716">
    <property type="protein sequence ID" value="BAD43479.1"/>
    <property type="molecule type" value="mRNA"/>
</dbReference>
<dbReference type="EMBL" id="AK176146">
    <property type="protein sequence ID" value="BAD43909.1"/>
    <property type="molecule type" value="mRNA"/>
</dbReference>
<dbReference type="EMBL" id="AK175979">
    <property type="protein sequence ID" value="BAD43742.1"/>
    <property type="molecule type" value="mRNA"/>
</dbReference>
<dbReference type="PIR" id="G96572">
    <property type="entry name" value="G96572"/>
</dbReference>
<dbReference type="RefSeq" id="NP_564623.2">
    <property type="nucleotide sequence ID" value="NM_104200.3"/>
</dbReference>
<dbReference type="FunCoup" id="Q8L636">
    <property type="interactions" value="844"/>
</dbReference>
<dbReference type="IntAct" id="Q8L636">
    <property type="interactions" value="1"/>
</dbReference>
<dbReference type="STRING" id="3702.Q8L636"/>
<dbReference type="GlyCosmos" id="Q8L636">
    <property type="glycosylation" value="1 site, No reported glycans"/>
</dbReference>
<dbReference type="GlyGen" id="Q8L636">
    <property type="glycosylation" value="1 site"/>
</dbReference>
<dbReference type="iPTMnet" id="Q8L636"/>
<dbReference type="PaxDb" id="3702-AT1G53210.1"/>
<dbReference type="ProteomicsDB" id="251315"/>
<dbReference type="EnsemblPlants" id="AT1G53210.1">
    <property type="protein sequence ID" value="AT1G53210.1"/>
    <property type="gene ID" value="AT1G53210"/>
</dbReference>
<dbReference type="GeneID" id="841755"/>
<dbReference type="Gramene" id="AT1G53210.1">
    <property type="protein sequence ID" value="AT1G53210.1"/>
    <property type="gene ID" value="AT1G53210"/>
</dbReference>
<dbReference type="KEGG" id="ath:AT1G53210"/>
<dbReference type="Araport" id="AT1G53210"/>
<dbReference type="TAIR" id="AT1G53210">
    <property type="gene designation" value="NCL"/>
</dbReference>
<dbReference type="eggNOG" id="ENOG502QV8Y">
    <property type="taxonomic scope" value="Eukaryota"/>
</dbReference>
<dbReference type="HOGENOM" id="CLU_023891_0_0_1"/>
<dbReference type="InParanoid" id="Q8L636"/>
<dbReference type="OMA" id="HTMKFLS"/>
<dbReference type="PhylomeDB" id="Q8L636"/>
<dbReference type="PRO" id="PR:Q8L636"/>
<dbReference type="Proteomes" id="UP000006548">
    <property type="component" value="Chromosome 1"/>
</dbReference>
<dbReference type="ExpressionAtlas" id="Q8L636">
    <property type="expression patterns" value="baseline and differential"/>
</dbReference>
<dbReference type="GO" id="GO:0016020">
    <property type="term" value="C:membrane"/>
    <property type="evidence" value="ECO:0000314"/>
    <property type="project" value="TAIR"/>
</dbReference>
<dbReference type="GO" id="GO:0000325">
    <property type="term" value="C:plant-type vacuole"/>
    <property type="evidence" value="ECO:0007005"/>
    <property type="project" value="TAIR"/>
</dbReference>
<dbReference type="GO" id="GO:0005886">
    <property type="term" value="C:plasma membrane"/>
    <property type="evidence" value="ECO:0007669"/>
    <property type="project" value="UniProtKB-SubCell"/>
</dbReference>
<dbReference type="GO" id="GO:0009506">
    <property type="term" value="C:plasmodesma"/>
    <property type="evidence" value="ECO:0007005"/>
    <property type="project" value="TAIR"/>
</dbReference>
<dbReference type="GO" id="GO:0005774">
    <property type="term" value="C:vacuolar membrane"/>
    <property type="evidence" value="ECO:0007005"/>
    <property type="project" value="TAIR"/>
</dbReference>
<dbReference type="GO" id="GO:0005773">
    <property type="term" value="C:vacuole"/>
    <property type="evidence" value="ECO:0007005"/>
    <property type="project" value="TAIR"/>
</dbReference>
<dbReference type="GO" id="GO:0005509">
    <property type="term" value="F:calcium ion binding"/>
    <property type="evidence" value="ECO:0000314"/>
    <property type="project" value="TAIR"/>
</dbReference>
<dbReference type="GO" id="GO:0005432">
    <property type="term" value="F:calcium:sodium antiporter activity"/>
    <property type="evidence" value="ECO:0000314"/>
    <property type="project" value="TAIR"/>
</dbReference>
<dbReference type="GO" id="GO:0003729">
    <property type="term" value="F:mRNA binding"/>
    <property type="evidence" value="ECO:0000314"/>
    <property type="project" value="TAIR"/>
</dbReference>
<dbReference type="GO" id="GO:0055074">
    <property type="term" value="P:calcium ion homeostasis"/>
    <property type="evidence" value="ECO:0000315"/>
    <property type="project" value="TAIR"/>
</dbReference>
<dbReference type="GO" id="GO:0071472">
    <property type="term" value="P:cellular response to salt stress"/>
    <property type="evidence" value="ECO:0000315"/>
    <property type="project" value="TAIR"/>
</dbReference>
<dbReference type="CDD" id="cd00051">
    <property type="entry name" value="EFh"/>
    <property type="match status" value="1"/>
</dbReference>
<dbReference type="FunFam" id="1.10.238.10:FF:000583">
    <property type="entry name" value="Sodium/calcium exchanger NCL"/>
    <property type="match status" value="1"/>
</dbReference>
<dbReference type="FunFam" id="1.20.1420.30:FF:000019">
    <property type="entry name" value="Sodium/calcium exchanger NCL2"/>
    <property type="match status" value="1"/>
</dbReference>
<dbReference type="Gene3D" id="1.10.238.10">
    <property type="entry name" value="EF-hand"/>
    <property type="match status" value="1"/>
</dbReference>
<dbReference type="InterPro" id="IPR004713">
    <property type="entry name" value="CaH_exchang"/>
</dbReference>
<dbReference type="InterPro" id="IPR011992">
    <property type="entry name" value="EF-hand-dom_pair"/>
</dbReference>
<dbReference type="InterPro" id="IPR018247">
    <property type="entry name" value="EF_Hand_1_Ca_BS"/>
</dbReference>
<dbReference type="InterPro" id="IPR002048">
    <property type="entry name" value="EF_hand_dom"/>
</dbReference>
<dbReference type="InterPro" id="IPR004837">
    <property type="entry name" value="NaCa_Exmemb"/>
</dbReference>
<dbReference type="PANTHER" id="PTHR31503:SF36">
    <property type="entry name" value="SODIUM_CALCIUM EXCHANGER MEMBRANE REGION DOMAIN-CONTAINING PROTEIN"/>
    <property type="match status" value="1"/>
</dbReference>
<dbReference type="PANTHER" id="PTHR31503">
    <property type="entry name" value="VACUOLAR CALCIUM ION TRANSPORTER"/>
    <property type="match status" value="1"/>
</dbReference>
<dbReference type="Pfam" id="PF13499">
    <property type="entry name" value="EF-hand_7"/>
    <property type="match status" value="1"/>
</dbReference>
<dbReference type="Pfam" id="PF01699">
    <property type="entry name" value="Na_Ca_ex"/>
    <property type="match status" value="2"/>
</dbReference>
<dbReference type="SMART" id="SM00054">
    <property type="entry name" value="EFh"/>
    <property type="match status" value="2"/>
</dbReference>
<dbReference type="SUPFAM" id="SSF47473">
    <property type="entry name" value="EF-hand"/>
    <property type="match status" value="1"/>
</dbReference>
<dbReference type="PROSITE" id="PS00018">
    <property type="entry name" value="EF_HAND_1"/>
    <property type="match status" value="1"/>
</dbReference>
<dbReference type="PROSITE" id="PS50222">
    <property type="entry name" value="EF_HAND_2"/>
    <property type="match status" value="2"/>
</dbReference>
<accession>Q8L636</accession>
<accession>Q67ZY8</accession>
<accession>Q9ASV9</accession>
<accession>Q9MAH9</accession>
<gene>
    <name evidence="6" type="primary">NCL</name>
    <name evidence="8" type="ordered locus">At1g53210</name>
    <name evidence="9" type="ORF">F12M16.12</name>
</gene>
<sequence length="585" mass="63417">MRFRSLISLLFLLFFTSSAYARFVSLNPSSTSLISDGIDGGSNLAGSGSVIKSVVSAPAEEKEEACEQTYGFMPCTKTALGNVFLILVYGFLMFTAATYLSAGSELLLEILGPGIVGGLFLPMLGALPDAMLIMVSGLSGDAATAQSQVSVGMGLLAGSTVMLLTVIWGTCTVVGKCDLRDSIAVNNQDTKGFHLKDSGVTVDIWTSYAARIMAISVIPFVIVQLPQMLGSTSGRQLSVLIALILSVLMLISYCVYQVFQPWIQRRRLAFAKHKHVISGILRHLKQHALGRLLDDEGQPDEHVIRKLFLTIDANNDGHLSAAELKALIIGISFEDIDFDKDDAVGKVLQDFDKTLDEQVDQEEFVRGIKQWLIQAMGGAPSGPEAGPRTMKFLDNFHVQTKREHALLGDNENGENDEEGGEVADPKWITIKAALLLLLGAAIAAAFADPLVDTVNNFSAATGIPSFFISFIALPLATNSSEAVSAIIFASRKKIRTASLTFSELCGGVTMNNILCLSVFLAIVYVRGLTWNFSSEVLVILIVCLVMGGFASFRTTYPLWTCFIAYLLYPFSLGLVYILDYWFGWS</sequence>
<protein>
    <recommendedName>
        <fullName evidence="7">Sodium/calcium exchanger NCL</fullName>
    </recommendedName>
    <alternativeName>
        <fullName evidence="7">Na(+)/Ca(2+)-exchange protein NCL</fullName>
    </alternativeName>
    <alternativeName>
        <fullName evidence="6">Protein NCX-like</fullName>
        <shortName evidence="6">AtNCL</shortName>
    </alternativeName>
</protein>
<proteinExistence type="evidence at transcript level"/>
<comment type="function">
    <text evidence="4 5">Possesses sodium/calcium exchanger (NCX) activity when expressed in a heterologous mammalian CHO-K1 cell system (PubMed:23148213). Does not possess cation/proton exchanger (CAX) or sodium/proton (NHX) activity when expressed in a heterologous yeast cell system. Has the ability to bind calcium in vitro. Participates in the maintenance of calcium homeostasis (PubMed:23148213, PubMed:26296956). May play a role in auxin response, diurnal rhythm and flowering time (PubMed:26296956). Involved in salt stress response (PubMed:23148213).</text>
</comment>
<comment type="subcellular location">
    <subcellularLocation>
        <location evidence="4">Cell membrane</location>
        <topology evidence="1">Multi-pass membrane protein</topology>
    </subcellularLocation>
    <subcellularLocation>
        <location evidence="5">Vacuole membrane</location>
        <topology evidence="1">Multi-pass membrane protein</topology>
    </subcellularLocation>
</comment>
<comment type="tissue specificity">
    <text evidence="4">Expressed in roots, leaves, stems, petals, stamens, ovules and siliques.</text>
</comment>
<comment type="induction">
    <text evidence="4 5">Induced by salt stress (PubMed:23148213, PubMed:26296956). Induced by cold stress, heat shock and abscisic acid (ABA) (PubMed:23148213). Induced by calcium and magnesium chloride, and osmotic shock (PubMed:26296956).</text>
</comment>
<comment type="disruption phenotype">
    <text evidence="4 5">No visible phenotype under normal growth conditions (PubMed:23148213). No visible phenotype under short day (SD) conditions, but early flowering under long day (LD) conditions (PubMed:26296956).</text>
</comment>
<comment type="similarity">
    <text evidence="7">Belongs to the Ca(2+):cation antiporter (CaCA) (TC 2.A.19) family.</text>
</comment>
<comment type="sequence caution" evidence="7">
    <conflict type="erroneous gene model prediction">
        <sequence resource="EMBL-CDS" id="AAF69532"/>
    </conflict>
</comment>
<name>NCL_ARATH</name>